<feature type="chain" id="PRO_0000381574" description="Biotin synthase">
    <location>
        <begin position="1"/>
        <end position="345"/>
    </location>
</feature>
<feature type="domain" description="Radical SAM core" evidence="2">
    <location>
        <begin position="66"/>
        <end position="293"/>
    </location>
</feature>
<feature type="binding site" evidence="1">
    <location>
        <position position="81"/>
    </location>
    <ligand>
        <name>[4Fe-4S] cluster</name>
        <dbReference type="ChEBI" id="CHEBI:49883"/>
        <note>4Fe-4S-S-AdoMet</note>
    </ligand>
</feature>
<feature type="binding site" evidence="1">
    <location>
        <position position="85"/>
    </location>
    <ligand>
        <name>[4Fe-4S] cluster</name>
        <dbReference type="ChEBI" id="CHEBI:49883"/>
        <note>4Fe-4S-S-AdoMet</note>
    </ligand>
</feature>
<feature type="binding site" evidence="1">
    <location>
        <position position="88"/>
    </location>
    <ligand>
        <name>[4Fe-4S] cluster</name>
        <dbReference type="ChEBI" id="CHEBI:49883"/>
        <note>4Fe-4S-S-AdoMet</note>
    </ligand>
</feature>
<feature type="binding site" evidence="1">
    <location>
        <position position="125"/>
    </location>
    <ligand>
        <name>[2Fe-2S] cluster</name>
        <dbReference type="ChEBI" id="CHEBI:190135"/>
    </ligand>
</feature>
<feature type="binding site" evidence="1">
    <location>
        <position position="156"/>
    </location>
    <ligand>
        <name>[2Fe-2S] cluster</name>
        <dbReference type="ChEBI" id="CHEBI:190135"/>
    </ligand>
</feature>
<feature type="binding site" evidence="1">
    <location>
        <position position="216"/>
    </location>
    <ligand>
        <name>[2Fe-2S] cluster</name>
        <dbReference type="ChEBI" id="CHEBI:190135"/>
    </ligand>
</feature>
<feature type="binding site" evidence="1">
    <location>
        <position position="288"/>
    </location>
    <ligand>
        <name>[2Fe-2S] cluster</name>
        <dbReference type="ChEBI" id="CHEBI:190135"/>
    </ligand>
</feature>
<name>BIOB_CUPMC</name>
<dbReference type="EC" id="2.8.1.6" evidence="1"/>
<dbReference type="EMBL" id="CP000352">
    <property type="protein sequence ID" value="ABF07003.1"/>
    <property type="status" value="ALT_INIT"/>
    <property type="molecule type" value="Genomic_DNA"/>
</dbReference>
<dbReference type="RefSeq" id="WP_008642857.1">
    <property type="nucleotide sequence ID" value="NC_007973.1"/>
</dbReference>
<dbReference type="SMR" id="Q1LS73"/>
<dbReference type="STRING" id="266264.Rmet_0117"/>
<dbReference type="GeneID" id="60822839"/>
<dbReference type="KEGG" id="rme:Rmet_0117"/>
<dbReference type="eggNOG" id="COG0502">
    <property type="taxonomic scope" value="Bacteria"/>
</dbReference>
<dbReference type="HOGENOM" id="CLU_033172_1_2_4"/>
<dbReference type="UniPathway" id="UPA00078">
    <property type="reaction ID" value="UER00162"/>
</dbReference>
<dbReference type="Proteomes" id="UP000002429">
    <property type="component" value="Chromosome"/>
</dbReference>
<dbReference type="GO" id="GO:0051537">
    <property type="term" value="F:2 iron, 2 sulfur cluster binding"/>
    <property type="evidence" value="ECO:0007669"/>
    <property type="project" value="UniProtKB-KW"/>
</dbReference>
<dbReference type="GO" id="GO:0051539">
    <property type="term" value="F:4 iron, 4 sulfur cluster binding"/>
    <property type="evidence" value="ECO:0007669"/>
    <property type="project" value="UniProtKB-KW"/>
</dbReference>
<dbReference type="GO" id="GO:0004076">
    <property type="term" value="F:biotin synthase activity"/>
    <property type="evidence" value="ECO:0007669"/>
    <property type="project" value="UniProtKB-UniRule"/>
</dbReference>
<dbReference type="GO" id="GO:0005506">
    <property type="term" value="F:iron ion binding"/>
    <property type="evidence" value="ECO:0007669"/>
    <property type="project" value="UniProtKB-UniRule"/>
</dbReference>
<dbReference type="GO" id="GO:0009102">
    <property type="term" value="P:biotin biosynthetic process"/>
    <property type="evidence" value="ECO:0007669"/>
    <property type="project" value="UniProtKB-UniRule"/>
</dbReference>
<dbReference type="CDD" id="cd01335">
    <property type="entry name" value="Radical_SAM"/>
    <property type="match status" value="1"/>
</dbReference>
<dbReference type="FunFam" id="3.20.20.70:FF:000011">
    <property type="entry name" value="Biotin synthase"/>
    <property type="match status" value="1"/>
</dbReference>
<dbReference type="Gene3D" id="3.20.20.70">
    <property type="entry name" value="Aldolase class I"/>
    <property type="match status" value="1"/>
</dbReference>
<dbReference type="HAMAP" id="MF_01694">
    <property type="entry name" value="BioB"/>
    <property type="match status" value="1"/>
</dbReference>
<dbReference type="InterPro" id="IPR013785">
    <property type="entry name" value="Aldolase_TIM"/>
</dbReference>
<dbReference type="InterPro" id="IPR010722">
    <property type="entry name" value="BATS_dom"/>
</dbReference>
<dbReference type="InterPro" id="IPR002684">
    <property type="entry name" value="Biotin_synth/BioAB"/>
</dbReference>
<dbReference type="InterPro" id="IPR024177">
    <property type="entry name" value="Biotin_synthase"/>
</dbReference>
<dbReference type="InterPro" id="IPR006638">
    <property type="entry name" value="Elp3/MiaA/NifB-like_rSAM"/>
</dbReference>
<dbReference type="InterPro" id="IPR007197">
    <property type="entry name" value="rSAM"/>
</dbReference>
<dbReference type="NCBIfam" id="TIGR00433">
    <property type="entry name" value="bioB"/>
    <property type="match status" value="1"/>
</dbReference>
<dbReference type="PANTHER" id="PTHR22976">
    <property type="entry name" value="BIOTIN SYNTHASE"/>
    <property type="match status" value="1"/>
</dbReference>
<dbReference type="PANTHER" id="PTHR22976:SF2">
    <property type="entry name" value="BIOTIN SYNTHASE, MITOCHONDRIAL"/>
    <property type="match status" value="1"/>
</dbReference>
<dbReference type="Pfam" id="PF06968">
    <property type="entry name" value="BATS"/>
    <property type="match status" value="1"/>
</dbReference>
<dbReference type="Pfam" id="PF04055">
    <property type="entry name" value="Radical_SAM"/>
    <property type="match status" value="1"/>
</dbReference>
<dbReference type="PIRSF" id="PIRSF001619">
    <property type="entry name" value="Biotin_synth"/>
    <property type="match status" value="1"/>
</dbReference>
<dbReference type="SFLD" id="SFLDF00272">
    <property type="entry name" value="biotin_synthase"/>
    <property type="match status" value="1"/>
</dbReference>
<dbReference type="SFLD" id="SFLDG01278">
    <property type="entry name" value="biotin_synthase_like"/>
    <property type="match status" value="1"/>
</dbReference>
<dbReference type="SMART" id="SM00876">
    <property type="entry name" value="BATS"/>
    <property type="match status" value="1"/>
</dbReference>
<dbReference type="SMART" id="SM00729">
    <property type="entry name" value="Elp3"/>
    <property type="match status" value="1"/>
</dbReference>
<dbReference type="SUPFAM" id="SSF102114">
    <property type="entry name" value="Radical SAM enzymes"/>
    <property type="match status" value="1"/>
</dbReference>
<dbReference type="PROSITE" id="PS51918">
    <property type="entry name" value="RADICAL_SAM"/>
    <property type="match status" value="1"/>
</dbReference>
<sequence>MTQQANQTVATISAEALRQSARNIAAAAPKEGDAWRVDDVAALFALPFNDLLFRAQQVHREHFDANTVQLSTLLSIKTGGCEEDCGYCPQSAHHDAGVKAEKLMDLEAVLDAAKAAKANGATRFCMGAAWREPKERHLEPVIDMVREVKAMGLETCVTLGMLKAEQAQRLKDAGLDYYNHNLDTSPEFYGKIITTRTYQDRLDTIGHVREAGINVCCGGIVGMGEAREARAGLIAQLANMDPYPESVPINNLVQVEGTPLAGTEALDPFEFVRTIAVARITMPRAMVRLSAGREAMDEALQALCFMAGANSIFYGEKLLTTGNPQADRDRALLARLDIRAEGYAG</sequence>
<gene>
    <name evidence="1" type="primary">bioB</name>
    <name type="ordered locus">Rmet_0117</name>
</gene>
<keyword id="KW-0001">2Fe-2S</keyword>
<keyword id="KW-0004">4Fe-4S</keyword>
<keyword id="KW-0093">Biotin biosynthesis</keyword>
<keyword id="KW-0408">Iron</keyword>
<keyword id="KW-0411">Iron-sulfur</keyword>
<keyword id="KW-0479">Metal-binding</keyword>
<keyword id="KW-1185">Reference proteome</keyword>
<keyword id="KW-0949">S-adenosyl-L-methionine</keyword>
<keyword id="KW-0808">Transferase</keyword>
<organism>
    <name type="scientific">Cupriavidus metallidurans (strain ATCC 43123 / DSM 2839 / NBRC 102507 / CH34)</name>
    <name type="common">Ralstonia metallidurans</name>
    <dbReference type="NCBI Taxonomy" id="266264"/>
    <lineage>
        <taxon>Bacteria</taxon>
        <taxon>Pseudomonadati</taxon>
        <taxon>Pseudomonadota</taxon>
        <taxon>Betaproteobacteria</taxon>
        <taxon>Burkholderiales</taxon>
        <taxon>Burkholderiaceae</taxon>
        <taxon>Cupriavidus</taxon>
    </lineage>
</organism>
<evidence type="ECO:0000255" key="1">
    <source>
        <dbReference type="HAMAP-Rule" id="MF_01694"/>
    </source>
</evidence>
<evidence type="ECO:0000255" key="2">
    <source>
        <dbReference type="PROSITE-ProRule" id="PRU01266"/>
    </source>
</evidence>
<evidence type="ECO:0000305" key="3"/>
<reference key="1">
    <citation type="journal article" date="2010" name="PLoS ONE">
        <title>The complete genome sequence of Cupriavidus metallidurans strain CH34, a master survivalist in harsh and anthropogenic environments.</title>
        <authorList>
            <person name="Janssen P.J."/>
            <person name="Van Houdt R."/>
            <person name="Moors H."/>
            <person name="Monsieurs P."/>
            <person name="Morin N."/>
            <person name="Michaux A."/>
            <person name="Benotmane M.A."/>
            <person name="Leys N."/>
            <person name="Vallaeys T."/>
            <person name="Lapidus A."/>
            <person name="Monchy S."/>
            <person name="Medigue C."/>
            <person name="Taghavi S."/>
            <person name="McCorkle S."/>
            <person name="Dunn J."/>
            <person name="van der Lelie D."/>
            <person name="Mergeay M."/>
        </authorList>
    </citation>
    <scope>NUCLEOTIDE SEQUENCE [LARGE SCALE GENOMIC DNA]</scope>
    <source>
        <strain>ATCC 43123 / DSM 2839 / NBRC 102507 / CH34</strain>
    </source>
</reference>
<comment type="function">
    <text evidence="1">Catalyzes the conversion of dethiobiotin (DTB) to biotin by the insertion of a sulfur atom into dethiobiotin via a radical-based mechanism.</text>
</comment>
<comment type="catalytic activity">
    <reaction evidence="1">
        <text>(4R,5S)-dethiobiotin + (sulfur carrier)-SH + 2 reduced [2Fe-2S]-[ferredoxin] + 2 S-adenosyl-L-methionine = (sulfur carrier)-H + biotin + 2 5'-deoxyadenosine + 2 L-methionine + 2 oxidized [2Fe-2S]-[ferredoxin]</text>
        <dbReference type="Rhea" id="RHEA:22060"/>
        <dbReference type="Rhea" id="RHEA-COMP:10000"/>
        <dbReference type="Rhea" id="RHEA-COMP:10001"/>
        <dbReference type="Rhea" id="RHEA-COMP:14737"/>
        <dbReference type="Rhea" id="RHEA-COMP:14739"/>
        <dbReference type="ChEBI" id="CHEBI:17319"/>
        <dbReference type="ChEBI" id="CHEBI:29917"/>
        <dbReference type="ChEBI" id="CHEBI:33737"/>
        <dbReference type="ChEBI" id="CHEBI:33738"/>
        <dbReference type="ChEBI" id="CHEBI:57586"/>
        <dbReference type="ChEBI" id="CHEBI:57844"/>
        <dbReference type="ChEBI" id="CHEBI:59789"/>
        <dbReference type="ChEBI" id="CHEBI:64428"/>
        <dbReference type="ChEBI" id="CHEBI:149473"/>
        <dbReference type="EC" id="2.8.1.6"/>
    </reaction>
</comment>
<comment type="cofactor">
    <cofactor evidence="1">
        <name>[4Fe-4S] cluster</name>
        <dbReference type="ChEBI" id="CHEBI:49883"/>
    </cofactor>
    <text evidence="1">Binds 1 [4Fe-4S] cluster. The cluster is coordinated with 3 cysteines and an exchangeable S-adenosyl-L-methionine.</text>
</comment>
<comment type="cofactor">
    <cofactor evidence="1">
        <name>[2Fe-2S] cluster</name>
        <dbReference type="ChEBI" id="CHEBI:190135"/>
    </cofactor>
    <text evidence="1">Binds 1 [2Fe-2S] cluster. The cluster is coordinated with 3 cysteines and 1 arginine.</text>
</comment>
<comment type="pathway">
    <text evidence="1">Cofactor biosynthesis; biotin biosynthesis; biotin from 7,8-diaminononanoate: step 2/2.</text>
</comment>
<comment type="subunit">
    <text evidence="1">Homodimer.</text>
</comment>
<comment type="similarity">
    <text evidence="1">Belongs to the radical SAM superfamily. Biotin synthase family.</text>
</comment>
<comment type="sequence caution" evidence="3">
    <conflict type="erroneous initiation">
        <sequence resource="EMBL-CDS" id="ABF07003"/>
    </conflict>
</comment>
<accession>Q1LS73</accession>
<protein>
    <recommendedName>
        <fullName evidence="1">Biotin synthase</fullName>
        <ecNumber evidence="1">2.8.1.6</ecNumber>
    </recommendedName>
</protein>
<proteinExistence type="inferred from homology"/>